<organism>
    <name type="scientific">Ralstonia nicotianae (strain ATCC BAA-1114 / GMI1000)</name>
    <name type="common">Ralstonia solanacearum</name>
    <dbReference type="NCBI Taxonomy" id="267608"/>
    <lineage>
        <taxon>Bacteria</taxon>
        <taxon>Pseudomonadati</taxon>
        <taxon>Pseudomonadota</taxon>
        <taxon>Betaproteobacteria</taxon>
        <taxon>Burkholderiales</taxon>
        <taxon>Burkholderiaceae</taxon>
        <taxon>Ralstonia</taxon>
        <taxon>Ralstonia solanacearum species complex</taxon>
    </lineage>
</organism>
<sequence>MSDAPTASALKTPVRVSGPVFFISDLHLSAGMPATAAAFERFVRTRAREARTLVILGDFFEYWVGDEELADPFHRHVAALLAELAQAGTRVLLMHGNRDFLLGKRFLATTQATLLPDPSVLEADGLRIVLAHGDALCTRDAAYMRFRRWTRKRWVQRLFLAMPLRWRLRIAQKMRADSEAGRALSANVAGEPRAAAMMGDVAPEAVDALFKAAGIPLLIHGHTHRPRLHHEPGGERWVLSDWDFDHAQPRGSFLRLQDGVLTAEPVTA</sequence>
<gene>
    <name evidence="1" type="primary">lpxH</name>
    <name type="ordered locus">RSc1163</name>
    <name type="ORF">RS04585</name>
</gene>
<reference key="1">
    <citation type="journal article" date="2002" name="Nature">
        <title>Genome sequence of the plant pathogen Ralstonia solanacearum.</title>
        <authorList>
            <person name="Salanoubat M."/>
            <person name="Genin S."/>
            <person name="Artiguenave F."/>
            <person name="Gouzy J."/>
            <person name="Mangenot S."/>
            <person name="Arlat M."/>
            <person name="Billault A."/>
            <person name="Brottier P."/>
            <person name="Camus J.-C."/>
            <person name="Cattolico L."/>
            <person name="Chandler M."/>
            <person name="Choisne N."/>
            <person name="Claudel-Renard C."/>
            <person name="Cunnac S."/>
            <person name="Demange N."/>
            <person name="Gaspin C."/>
            <person name="Lavie M."/>
            <person name="Moisan A."/>
            <person name="Robert C."/>
            <person name="Saurin W."/>
            <person name="Schiex T."/>
            <person name="Siguier P."/>
            <person name="Thebault P."/>
            <person name="Whalen M."/>
            <person name="Wincker P."/>
            <person name="Levy M."/>
            <person name="Weissenbach J."/>
            <person name="Boucher C.A."/>
        </authorList>
    </citation>
    <scope>NUCLEOTIDE SEQUENCE [LARGE SCALE GENOMIC DNA]</scope>
    <source>
        <strain>ATCC BAA-1114 / GMI1000</strain>
    </source>
</reference>
<protein>
    <recommendedName>
        <fullName evidence="1">UDP-2,3-diacylglucosamine hydrolase</fullName>
        <ecNumber evidence="1">3.6.1.54</ecNumber>
    </recommendedName>
    <alternativeName>
        <fullName evidence="1">UDP-2,3-diacylglucosamine diphosphatase</fullName>
    </alternativeName>
</protein>
<feature type="chain" id="PRO_0000214120" description="UDP-2,3-diacylglucosamine hydrolase">
    <location>
        <begin position="1"/>
        <end position="268"/>
    </location>
</feature>
<feature type="binding site" evidence="1">
    <location>
        <position position="25"/>
    </location>
    <ligand>
        <name>Mn(2+)</name>
        <dbReference type="ChEBI" id="CHEBI:29035"/>
        <label>1</label>
    </ligand>
</feature>
<feature type="binding site" evidence="1">
    <location>
        <position position="27"/>
    </location>
    <ligand>
        <name>Mn(2+)</name>
        <dbReference type="ChEBI" id="CHEBI:29035"/>
        <label>1</label>
    </ligand>
</feature>
<feature type="binding site" evidence="1">
    <location>
        <position position="58"/>
    </location>
    <ligand>
        <name>Mn(2+)</name>
        <dbReference type="ChEBI" id="CHEBI:29035"/>
        <label>1</label>
    </ligand>
</feature>
<feature type="binding site" evidence="1">
    <location>
        <position position="58"/>
    </location>
    <ligand>
        <name>Mn(2+)</name>
        <dbReference type="ChEBI" id="CHEBI:29035"/>
        <label>2</label>
    </ligand>
</feature>
<feature type="binding site" evidence="1">
    <location>
        <begin position="97"/>
        <end position="98"/>
    </location>
    <ligand>
        <name>substrate</name>
    </ligand>
</feature>
<feature type="binding site" evidence="1">
    <location>
        <position position="97"/>
    </location>
    <ligand>
        <name>Mn(2+)</name>
        <dbReference type="ChEBI" id="CHEBI:29035"/>
        <label>2</label>
    </ligand>
</feature>
<feature type="binding site" evidence="1">
    <location>
        <position position="132"/>
    </location>
    <ligand>
        <name>Mn(2+)</name>
        <dbReference type="ChEBI" id="CHEBI:29035"/>
        <label>2</label>
    </ligand>
</feature>
<feature type="binding site" evidence="1">
    <location>
        <position position="140"/>
    </location>
    <ligand>
        <name>substrate</name>
    </ligand>
</feature>
<feature type="binding site" evidence="1">
    <location>
        <position position="178"/>
    </location>
    <ligand>
        <name>substrate</name>
    </ligand>
</feature>
<feature type="binding site" evidence="1">
    <location>
        <position position="191"/>
    </location>
    <ligand>
        <name>substrate</name>
    </ligand>
</feature>
<feature type="binding site" evidence="1">
    <location>
        <position position="222"/>
    </location>
    <ligand>
        <name>Mn(2+)</name>
        <dbReference type="ChEBI" id="CHEBI:29035"/>
        <label>2</label>
    </ligand>
</feature>
<feature type="binding site" evidence="1">
    <location>
        <position position="222"/>
    </location>
    <ligand>
        <name>substrate</name>
    </ligand>
</feature>
<feature type="binding site" evidence="1">
    <location>
        <position position="224"/>
    </location>
    <ligand>
        <name>Mn(2+)</name>
        <dbReference type="ChEBI" id="CHEBI:29035"/>
        <label>1</label>
    </ligand>
</feature>
<proteinExistence type="inferred from homology"/>
<evidence type="ECO:0000255" key="1">
    <source>
        <dbReference type="HAMAP-Rule" id="MF_00575"/>
    </source>
</evidence>
<accession>Q8Y081</accession>
<keyword id="KW-0997">Cell inner membrane</keyword>
<keyword id="KW-1003">Cell membrane</keyword>
<keyword id="KW-0378">Hydrolase</keyword>
<keyword id="KW-0441">Lipid A biosynthesis</keyword>
<keyword id="KW-0444">Lipid biosynthesis</keyword>
<keyword id="KW-0443">Lipid metabolism</keyword>
<keyword id="KW-0464">Manganese</keyword>
<keyword id="KW-0472">Membrane</keyword>
<keyword id="KW-0479">Metal-binding</keyword>
<keyword id="KW-1185">Reference proteome</keyword>
<name>LPXH_RALN1</name>
<dbReference type="EC" id="3.6.1.54" evidence="1"/>
<dbReference type="EMBL" id="AL646052">
    <property type="protein sequence ID" value="CAD14865.1"/>
    <property type="molecule type" value="Genomic_DNA"/>
</dbReference>
<dbReference type="RefSeq" id="WP_011001113.1">
    <property type="nucleotide sequence ID" value="NC_003295.1"/>
</dbReference>
<dbReference type="SMR" id="Q8Y081"/>
<dbReference type="STRING" id="267608.RSc1163"/>
<dbReference type="EnsemblBacteria" id="CAD14865">
    <property type="protein sequence ID" value="CAD14865"/>
    <property type="gene ID" value="RSc1163"/>
</dbReference>
<dbReference type="KEGG" id="rso:RSc1163"/>
<dbReference type="eggNOG" id="COG2908">
    <property type="taxonomic scope" value="Bacteria"/>
</dbReference>
<dbReference type="HOGENOM" id="CLU_074586_0_0_4"/>
<dbReference type="UniPathway" id="UPA00359">
    <property type="reaction ID" value="UER00480"/>
</dbReference>
<dbReference type="Proteomes" id="UP000001436">
    <property type="component" value="Chromosome"/>
</dbReference>
<dbReference type="GO" id="GO:0005737">
    <property type="term" value="C:cytoplasm"/>
    <property type="evidence" value="ECO:0007669"/>
    <property type="project" value="InterPro"/>
</dbReference>
<dbReference type="GO" id="GO:0019897">
    <property type="term" value="C:extrinsic component of plasma membrane"/>
    <property type="evidence" value="ECO:0007669"/>
    <property type="project" value="UniProtKB-UniRule"/>
</dbReference>
<dbReference type="GO" id="GO:0030145">
    <property type="term" value="F:manganese ion binding"/>
    <property type="evidence" value="ECO:0007669"/>
    <property type="project" value="UniProtKB-UniRule"/>
</dbReference>
<dbReference type="GO" id="GO:0008758">
    <property type="term" value="F:UDP-2,3-diacylglucosamine hydrolase activity"/>
    <property type="evidence" value="ECO:0007669"/>
    <property type="project" value="UniProtKB-UniRule"/>
</dbReference>
<dbReference type="GO" id="GO:0009245">
    <property type="term" value="P:lipid A biosynthetic process"/>
    <property type="evidence" value="ECO:0007669"/>
    <property type="project" value="UniProtKB-UniRule"/>
</dbReference>
<dbReference type="CDD" id="cd07398">
    <property type="entry name" value="MPP_YbbF-LpxH"/>
    <property type="match status" value="1"/>
</dbReference>
<dbReference type="Gene3D" id="3.60.21.10">
    <property type="match status" value="1"/>
</dbReference>
<dbReference type="HAMAP" id="MF_00575">
    <property type="entry name" value="LpxH"/>
    <property type="match status" value="1"/>
</dbReference>
<dbReference type="InterPro" id="IPR004843">
    <property type="entry name" value="Calcineurin-like_PHP_ApaH"/>
</dbReference>
<dbReference type="InterPro" id="IPR043461">
    <property type="entry name" value="LpxH-like"/>
</dbReference>
<dbReference type="InterPro" id="IPR029052">
    <property type="entry name" value="Metallo-depent_PP-like"/>
</dbReference>
<dbReference type="InterPro" id="IPR010138">
    <property type="entry name" value="UDP-diacylglucosamine_Hdrlase"/>
</dbReference>
<dbReference type="NCBIfam" id="TIGR01854">
    <property type="entry name" value="lipid_A_lpxH"/>
    <property type="match status" value="1"/>
</dbReference>
<dbReference type="NCBIfam" id="NF003743">
    <property type="entry name" value="PRK05340.1"/>
    <property type="match status" value="1"/>
</dbReference>
<dbReference type="PANTHER" id="PTHR34990:SF1">
    <property type="entry name" value="UDP-2,3-DIACYLGLUCOSAMINE HYDROLASE"/>
    <property type="match status" value="1"/>
</dbReference>
<dbReference type="PANTHER" id="PTHR34990">
    <property type="entry name" value="UDP-2,3-DIACYLGLUCOSAMINE HYDROLASE-RELATED"/>
    <property type="match status" value="1"/>
</dbReference>
<dbReference type="Pfam" id="PF00149">
    <property type="entry name" value="Metallophos"/>
    <property type="match status" value="1"/>
</dbReference>
<dbReference type="SUPFAM" id="SSF56300">
    <property type="entry name" value="Metallo-dependent phosphatases"/>
    <property type="match status" value="1"/>
</dbReference>
<comment type="function">
    <text evidence="1">Hydrolyzes the pyrophosphate bond of UDP-2,3-diacylglucosamine to yield 2,3-diacylglucosamine 1-phosphate (lipid X) and UMP by catalyzing the attack of water at the alpha-P atom. Involved in the biosynthesis of lipid A, a phosphorylated glycolipid that anchors the lipopolysaccharide to the outer membrane of the cell.</text>
</comment>
<comment type="catalytic activity">
    <reaction evidence="1">
        <text>UDP-2-N,3-O-bis[(3R)-3-hydroxytetradecanoyl]-alpha-D-glucosamine + H2O = 2-N,3-O-bis[(3R)-3-hydroxytetradecanoyl]-alpha-D-glucosaminyl 1-phosphate + UMP + 2 H(+)</text>
        <dbReference type="Rhea" id="RHEA:25213"/>
        <dbReference type="ChEBI" id="CHEBI:15377"/>
        <dbReference type="ChEBI" id="CHEBI:15378"/>
        <dbReference type="ChEBI" id="CHEBI:57865"/>
        <dbReference type="ChEBI" id="CHEBI:57957"/>
        <dbReference type="ChEBI" id="CHEBI:78847"/>
        <dbReference type="EC" id="3.6.1.54"/>
    </reaction>
</comment>
<comment type="cofactor">
    <cofactor evidence="1">
        <name>Mn(2+)</name>
        <dbReference type="ChEBI" id="CHEBI:29035"/>
    </cofactor>
    <text evidence="1">Binds 2 Mn(2+) ions per subunit in a binuclear metal center.</text>
</comment>
<comment type="pathway">
    <text evidence="1">Glycolipid biosynthesis; lipid IV(A) biosynthesis; lipid IV(A) from (3R)-3-hydroxytetradecanoyl-[acyl-carrier-protein] and UDP-N-acetyl-alpha-D-glucosamine: step 4/6.</text>
</comment>
<comment type="subcellular location">
    <subcellularLocation>
        <location evidence="1">Cell inner membrane</location>
        <topology evidence="1">Peripheral membrane protein</topology>
        <orientation evidence="1">Cytoplasmic side</orientation>
    </subcellularLocation>
</comment>
<comment type="similarity">
    <text evidence="1">Belongs to the LpxH family.</text>
</comment>